<proteinExistence type="evidence at protein level"/>
<dbReference type="EC" id="4.3.1.7" evidence="1 2 3"/>
<dbReference type="EMBL" id="U00096">
    <property type="protein sequence ID" value="AAC75494.2"/>
    <property type="molecule type" value="Genomic_DNA"/>
</dbReference>
<dbReference type="EMBL" id="AP009048">
    <property type="protein sequence ID" value="BAA16323.1"/>
    <property type="molecule type" value="Genomic_DNA"/>
</dbReference>
<dbReference type="PIR" id="H65018">
    <property type="entry name" value="H65018"/>
</dbReference>
<dbReference type="RefSeq" id="NP_416936.4">
    <property type="nucleotide sequence ID" value="NC_000913.3"/>
</dbReference>
<dbReference type="RefSeq" id="WP_000769961.1">
    <property type="nucleotide sequence ID" value="NZ_SSUR01000044.1"/>
</dbReference>
<dbReference type="PDB" id="3ABO">
    <property type="method" value="X-ray"/>
    <property type="resolution" value="2.10 A"/>
    <property type="chains" value="A/C=1-453"/>
</dbReference>
<dbReference type="PDB" id="3ABQ">
    <property type="method" value="X-ray"/>
    <property type="resolution" value="2.05 A"/>
    <property type="chains" value="A/C=1-453"/>
</dbReference>
<dbReference type="PDB" id="3ABR">
    <property type="method" value="X-ray"/>
    <property type="resolution" value="2.10 A"/>
    <property type="chains" value="A/C=1-453"/>
</dbReference>
<dbReference type="PDB" id="3ABS">
    <property type="method" value="X-ray"/>
    <property type="resolution" value="2.25 A"/>
    <property type="chains" value="A/C=1-453"/>
</dbReference>
<dbReference type="PDB" id="3ANY">
    <property type="method" value="X-ray"/>
    <property type="resolution" value="2.10 A"/>
    <property type="chains" value="A/C=1-453"/>
</dbReference>
<dbReference type="PDB" id="3AO0">
    <property type="method" value="X-ray"/>
    <property type="resolution" value="2.25 A"/>
    <property type="chains" value="A/C=1-453"/>
</dbReference>
<dbReference type="PDB" id="5YSN">
    <property type="method" value="X-ray"/>
    <property type="resolution" value="2.00 A"/>
    <property type="chains" value="A/C=1-453"/>
</dbReference>
<dbReference type="PDB" id="5YSR">
    <property type="method" value="X-ray"/>
    <property type="resolution" value="2.05 A"/>
    <property type="chains" value="A/C=1-453"/>
</dbReference>
<dbReference type="PDB" id="7XRM">
    <property type="method" value="X-ray"/>
    <property type="resolution" value="2.13 A"/>
    <property type="chains" value="A/C=1-453"/>
</dbReference>
<dbReference type="PDB" id="7XRN">
    <property type="method" value="X-ray"/>
    <property type="resolution" value="2.07 A"/>
    <property type="chains" value="A/C=1-453"/>
</dbReference>
<dbReference type="PDBsum" id="3ABO"/>
<dbReference type="PDBsum" id="3ABQ"/>
<dbReference type="PDBsum" id="3ABR"/>
<dbReference type="PDBsum" id="3ABS"/>
<dbReference type="PDBsum" id="3ANY"/>
<dbReference type="PDBsum" id="3AO0"/>
<dbReference type="PDBsum" id="5YSN"/>
<dbReference type="PDBsum" id="5YSR"/>
<dbReference type="PDBsum" id="7XRM"/>
<dbReference type="PDBsum" id="7XRN"/>
<dbReference type="SMR" id="P0AEJ6"/>
<dbReference type="BioGRID" id="4260578">
    <property type="interactions" value="11"/>
</dbReference>
<dbReference type="ComplexPortal" id="CPX-2313">
    <property type="entry name" value="Ethanolamine ammonia-lyase complex"/>
</dbReference>
<dbReference type="FunCoup" id="P0AEJ6">
    <property type="interactions" value="38"/>
</dbReference>
<dbReference type="IntAct" id="P0AEJ6">
    <property type="interactions" value="1"/>
</dbReference>
<dbReference type="STRING" id="511145.b2441"/>
<dbReference type="jPOST" id="P0AEJ6"/>
<dbReference type="PaxDb" id="511145-b2441"/>
<dbReference type="DNASU" id="946924"/>
<dbReference type="EnsemblBacteria" id="AAC75494">
    <property type="protein sequence ID" value="AAC75494"/>
    <property type="gene ID" value="b2441"/>
</dbReference>
<dbReference type="GeneID" id="75204289"/>
<dbReference type="GeneID" id="946924"/>
<dbReference type="KEGG" id="ecj:JW2434"/>
<dbReference type="KEGG" id="eco:b2441"/>
<dbReference type="KEGG" id="ecoc:C3026_13555"/>
<dbReference type="PATRIC" id="fig|1411691.4.peg.4290"/>
<dbReference type="EchoBASE" id="EB4299"/>
<dbReference type="eggNOG" id="COG4303">
    <property type="taxonomic scope" value="Bacteria"/>
</dbReference>
<dbReference type="HOGENOM" id="CLU_048555_0_0_6"/>
<dbReference type="InParanoid" id="P0AEJ6"/>
<dbReference type="OMA" id="PMADDCM"/>
<dbReference type="OrthoDB" id="9770909at2"/>
<dbReference type="PhylomeDB" id="P0AEJ6"/>
<dbReference type="BioCyc" id="EcoCyc:EUTB-MONOMER"/>
<dbReference type="BioCyc" id="MetaCyc:EUTB-MONOMER"/>
<dbReference type="UniPathway" id="UPA00560"/>
<dbReference type="EvolutionaryTrace" id="P0AEJ6"/>
<dbReference type="PRO" id="PR:P0AEJ6"/>
<dbReference type="Proteomes" id="UP000000625">
    <property type="component" value="Chromosome"/>
</dbReference>
<dbReference type="GO" id="GO:0005829">
    <property type="term" value="C:cytosol"/>
    <property type="evidence" value="ECO:0000314"/>
    <property type="project" value="EcoCyc"/>
</dbReference>
<dbReference type="GO" id="GO:0009350">
    <property type="term" value="C:ethanolamine ammonia-lyase complex"/>
    <property type="evidence" value="ECO:0000314"/>
    <property type="project" value="EcoCyc"/>
</dbReference>
<dbReference type="GO" id="GO:0031471">
    <property type="term" value="C:ethanolamine degradation polyhedral organelle"/>
    <property type="evidence" value="ECO:0007669"/>
    <property type="project" value="UniProtKB-UniRule"/>
</dbReference>
<dbReference type="GO" id="GO:0031419">
    <property type="term" value="F:cobalamin binding"/>
    <property type="evidence" value="ECO:0007669"/>
    <property type="project" value="UniProtKB-UniRule"/>
</dbReference>
<dbReference type="GO" id="GO:0008851">
    <property type="term" value="F:ethanolamine ammonia-lyase activity"/>
    <property type="evidence" value="ECO:0007669"/>
    <property type="project" value="UniProtKB-UniRule"/>
</dbReference>
<dbReference type="GO" id="GO:0006520">
    <property type="term" value="P:amino acid metabolic process"/>
    <property type="evidence" value="ECO:0007669"/>
    <property type="project" value="InterPro"/>
</dbReference>
<dbReference type="GO" id="GO:0046336">
    <property type="term" value="P:ethanolamine catabolic process"/>
    <property type="evidence" value="ECO:0000314"/>
    <property type="project" value="ComplexPortal"/>
</dbReference>
<dbReference type="FunFam" id="1.10.220.70:FF:000001">
    <property type="entry name" value="Ethanolamine ammonia-lyase heavy chain"/>
    <property type="match status" value="1"/>
</dbReference>
<dbReference type="FunFam" id="2.30.170.30:FF:000001">
    <property type="entry name" value="Ethanolamine ammonia-lyase heavy chain"/>
    <property type="match status" value="1"/>
</dbReference>
<dbReference type="FunFam" id="3.20.20.70:FF:000055">
    <property type="entry name" value="Ethanolamine ammonia-lyase heavy chain"/>
    <property type="match status" value="1"/>
</dbReference>
<dbReference type="Gene3D" id="3.20.20.70">
    <property type="entry name" value="Aldolase class I"/>
    <property type="match status" value="1"/>
</dbReference>
<dbReference type="Gene3D" id="2.30.170.30">
    <property type="entry name" value="ethanolamine ammonia-lyase heavy chain domain like"/>
    <property type="match status" value="1"/>
</dbReference>
<dbReference type="Gene3D" id="1.10.220.70">
    <property type="entry name" value="lyase"/>
    <property type="match status" value="1"/>
</dbReference>
<dbReference type="HAMAP" id="MF_00861">
    <property type="entry name" value="EutB"/>
    <property type="match status" value="1"/>
</dbReference>
<dbReference type="InterPro" id="IPR013785">
    <property type="entry name" value="Aldolase_TIM"/>
</dbReference>
<dbReference type="InterPro" id="IPR010628">
    <property type="entry name" value="EutB"/>
</dbReference>
<dbReference type="InterPro" id="IPR044939">
    <property type="entry name" value="EutB_dom_2_sf"/>
</dbReference>
<dbReference type="InterPro" id="IPR044941">
    <property type="entry name" value="EutB_N_sf"/>
</dbReference>
<dbReference type="NCBIfam" id="NF011649">
    <property type="entry name" value="PRK15067.1"/>
    <property type="match status" value="1"/>
</dbReference>
<dbReference type="PANTHER" id="PTHR39329">
    <property type="entry name" value="ETHANOLAMINE AMMONIA-LYASE HEAVY CHAIN"/>
    <property type="match status" value="1"/>
</dbReference>
<dbReference type="PANTHER" id="PTHR39329:SF1">
    <property type="entry name" value="ETHANOLAMINE AMMONIA-LYASE LARGE SUBUNIT"/>
    <property type="match status" value="1"/>
</dbReference>
<dbReference type="Pfam" id="PF06751">
    <property type="entry name" value="EutB"/>
    <property type="match status" value="1"/>
</dbReference>
<dbReference type="PIRSF" id="PIRSF018788">
    <property type="entry name" value="EutB"/>
    <property type="match status" value="1"/>
</dbReference>
<comment type="function">
    <text evidence="2 3 14">Catalyzes the deamination of various vicinal amino-alcohols to oxo compounds (PubMed:19762342). Allows this organism to utilize ethanolamine as the sole source of nitrogen and carbon in the presence of external vitamin B12. It is spontaneously inactivated by its substrate and reactivated by EutA (PubMed:15466038).</text>
</comment>
<comment type="catalytic activity">
    <reaction evidence="1 2 3">
        <text>ethanolamine = acetaldehyde + NH4(+)</text>
        <dbReference type="Rhea" id="RHEA:15313"/>
        <dbReference type="ChEBI" id="CHEBI:15343"/>
        <dbReference type="ChEBI" id="CHEBI:28938"/>
        <dbReference type="ChEBI" id="CHEBI:57603"/>
        <dbReference type="EC" id="4.3.1.7"/>
    </reaction>
</comment>
<comment type="cofactor">
    <cofactor evidence="1 3 4 5 6">
        <name>adenosylcob(III)alamin</name>
        <dbReference type="ChEBI" id="CHEBI:18408"/>
    </cofactor>
    <text evidence="1 4 5 6 12">Binds 1 AdoCbl between the large and small subunits, with 6 cofactors per holoenzyme.</text>
</comment>
<comment type="activity regulation">
    <text evidence="2 3 11">Inhibited by 5-adeninylpentylcobalamin (AdePeCbl), a cofactor analog (PubMed:19762342). Irreversibly inhibited during catalysis by cleavage of the Co-C bond of the cobalamin coenzyme (Probable) (PubMed:19762342). Reactivated by EutA, which probably involves an ATP-dependent cobalamin exchange (PubMed:15466038).</text>
</comment>
<comment type="biophysicochemical properties">
    <kinetics>
        <KM evidence="3">8.2 uM for ethanolamine</KM>
        <KM evidence="3">0.055 uM for adenosylcob(III)alamin</KM>
    </kinetics>
</comment>
<comment type="pathway">
    <text evidence="1">Amine and polyamine degradation; ethanolamine degradation.</text>
</comment>
<comment type="subunit">
    <text evidence="3 4 5 6 13">The basic unit is a heterodimer which dimerizes to form tetramers (PubMed:19762342, PubMed:20519496, PubMed:21142024, PubMed:29797764). The heterotetramers trimerize; 6 large subunits form a core ring with 6 small subunits projecting outwards (Probable).</text>
</comment>
<comment type="subcellular location">
    <subcellularLocation>
        <location evidence="1">Bacterial microcompartment</location>
    </subcellularLocation>
</comment>
<comment type="induction">
    <text evidence="2">When grown in ethanolamine and adenosylcobalamin (AdoCbl) (at protein level). Note this experiment was done in strain JM109, which expresses the eut operon.</text>
</comment>
<comment type="similarity">
    <text evidence="1 10">Belongs to the EutB family.</text>
</comment>
<comment type="caution">
    <text evidence="15">In strain MG1655 the eut operon is interrupted by the CPZ-55 prophage, encoding 9 genes situated between eutA and eutB, which are translated in the other direction. CPZ-55 may prevent expression of the eut operon in strain MG1655. Strain W3110 does not have this prophage element and should be able to express the operon.</text>
</comment>
<gene>
    <name evidence="1" type="primary">eutB</name>
    <name type="ordered locus">b2441</name>
    <name type="ordered locus">JW2434</name>
</gene>
<accession>P0AEJ6</accession>
<accession>P19635</accession>
<accession>P78094</accession>
<accession>P78300</accession>
<protein>
    <recommendedName>
        <fullName evidence="1 9">Ethanolamine ammonia-lyase large subunit</fullName>
        <shortName evidence="1 7">EAL large subunit</shortName>
        <ecNumber evidence="1 2 3">4.3.1.7</ecNumber>
    </recommendedName>
    <alternativeName>
        <fullName evidence="8">Ethanolamine ammonia-lyase alpha subunit</fullName>
    </alternativeName>
    <alternativeName>
        <fullName>Ethanolamine ammonia-lyase heavy chain</fullName>
    </alternativeName>
    <alternativeName>
        <fullName evidence="8">Ethanolamine deaminase large subunit</fullName>
    </alternativeName>
</protein>
<reference key="1">
    <citation type="journal article" date="1997" name="DNA Res.">
        <title>Construction of a contiguous 874-kb sequence of the Escherichia coli-K12 genome corresponding to 50.0-68.8 min on the linkage map and analysis of its sequence features.</title>
        <authorList>
            <person name="Yamamoto Y."/>
            <person name="Aiba H."/>
            <person name="Baba T."/>
            <person name="Hayashi K."/>
            <person name="Inada T."/>
            <person name="Isono K."/>
            <person name="Itoh T."/>
            <person name="Kimura S."/>
            <person name="Kitagawa M."/>
            <person name="Makino K."/>
            <person name="Miki T."/>
            <person name="Mitsuhashi N."/>
            <person name="Mizobuchi K."/>
            <person name="Mori H."/>
            <person name="Nakade S."/>
            <person name="Nakamura Y."/>
            <person name="Nashimoto H."/>
            <person name="Oshima T."/>
            <person name="Oyama S."/>
            <person name="Saito N."/>
            <person name="Sampei G."/>
            <person name="Satoh Y."/>
            <person name="Sivasundaram S."/>
            <person name="Tagami H."/>
            <person name="Takahashi H."/>
            <person name="Takeda J."/>
            <person name="Takemoto K."/>
            <person name="Uehara K."/>
            <person name="Wada C."/>
            <person name="Yamagata S."/>
            <person name="Horiuchi T."/>
        </authorList>
    </citation>
    <scope>NUCLEOTIDE SEQUENCE [LARGE SCALE GENOMIC DNA]</scope>
    <source>
        <strain>K12 / W3110 / ATCC 27325 / DSM 5911</strain>
    </source>
</reference>
<reference key="2">
    <citation type="journal article" date="1997" name="Science">
        <title>The complete genome sequence of Escherichia coli K-12.</title>
        <authorList>
            <person name="Blattner F.R."/>
            <person name="Plunkett G. III"/>
            <person name="Bloch C.A."/>
            <person name="Perna N.T."/>
            <person name="Burland V."/>
            <person name="Riley M."/>
            <person name="Collado-Vides J."/>
            <person name="Glasner J.D."/>
            <person name="Rode C.K."/>
            <person name="Mayhew G.F."/>
            <person name="Gregor J."/>
            <person name="Davis N.W."/>
            <person name="Kirkpatrick H.A."/>
            <person name="Goeden M.A."/>
            <person name="Rose D.J."/>
            <person name="Mau B."/>
            <person name="Shao Y."/>
        </authorList>
    </citation>
    <scope>NUCLEOTIDE SEQUENCE [LARGE SCALE GENOMIC DNA]</scope>
    <source>
        <strain>K12 / MG1655 / ATCC 47076</strain>
    </source>
</reference>
<reference key="3">
    <citation type="journal article" date="2006" name="Mol. Syst. Biol.">
        <title>Highly accurate genome sequences of Escherichia coli K-12 strains MG1655 and W3110.</title>
        <authorList>
            <person name="Hayashi K."/>
            <person name="Morooka N."/>
            <person name="Yamamoto Y."/>
            <person name="Fujita K."/>
            <person name="Isono K."/>
            <person name="Choi S."/>
            <person name="Ohtsubo E."/>
            <person name="Baba T."/>
            <person name="Wanner B.L."/>
            <person name="Mori H."/>
            <person name="Horiuchi T."/>
        </authorList>
    </citation>
    <scope>NUCLEOTIDE SEQUENCE [LARGE SCALE GENOMIC DNA]</scope>
    <source>
        <strain>K12 / W3110 / ATCC 27325 / DSM 5911</strain>
    </source>
</reference>
<reference key="4">
    <citation type="journal article" date="1990" name="J. Biol. Chem.">
        <title>Cloning, sequencing, and expression of the genes encoding the adenosylcobalamin-dependent ethanolamine ammonia-lyase of Salmonella typhimurium.</title>
        <authorList>
            <person name="Faust L.R.P."/>
            <person name="Connor J.A."/>
            <person name="Roof D.M."/>
            <person name="Hoch J.A."/>
            <person name="Babior B.M."/>
        </authorList>
    </citation>
    <scope>PROTEIN SEQUENCE OF 1-30</scope>
    <scope>FUNCTION</scope>
    <source>
        <strain>ATCC 9723</strain>
    </source>
</reference>
<reference key="5">
    <citation type="journal article" date="2010" name="J. Biochem.">
        <title>Purification and some properties of wild-type and N-terminal-truncated ethanolamine ammonia-lyase of Escherichia coli.</title>
        <authorList>
            <person name="Akita K."/>
            <person name="Hieda N."/>
            <person name="Baba N."/>
            <person name="Kawaguchi S."/>
            <person name="Sakamoto H."/>
            <person name="Nakanishi Y."/>
            <person name="Yamanishi M."/>
            <person name="Mori K."/>
            <person name="Toraya T."/>
        </authorList>
    </citation>
    <scope>PROTEIN SEQUENCE OF 1-6</scope>
    <scope>FUNCTION</scope>
    <scope>CATALYTIC ACTIVITY</scope>
    <scope>COFACTOR</scope>
    <scope>ACTIVITY REGULATION</scope>
    <scope>BIOPHYSICOCHEMICAL PROPERTIES</scope>
    <scope>SUBUNIT</scope>
    <source>
        <strain>K12 / W3110 / ATCC 27325 / DSM 5911</strain>
    </source>
</reference>
<reference key="6">
    <citation type="journal article" date="2004" name="J. Bacteriol.">
        <title>Identification of a reactivating factor for adenosylcobalamin-dependent ethanolamine ammonia lyase.</title>
        <authorList>
            <person name="Mori K."/>
            <person name="Bando R."/>
            <person name="Hieda N."/>
            <person name="Toraya T."/>
        </authorList>
    </citation>
    <scope>FUNCTION</scope>
    <scope>CATALYTIC ACTIVITY</scope>
    <scope>ACTIVITY REGULATION</scope>
    <scope>INDUCTION</scope>
    <source>
        <strain>K12 / JM109 / ATCC 53323</strain>
        <strain>K12 / W3110 / ATCC 27325 / DSM 5911</strain>
    </source>
</reference>
<reference evidence="16 17 18 19" key="7">
    <citation type="journal article" date="2010" name="J. Biol. Chem.">
        <title>Crystal structures of ethanolamine ammonia-lyase complexed with coenzyme B12 analogs and substrates.</title>
        <authorList>
            <person name="Shibata N."/>
            <person name="Tamagaki H."/>
            <person name="Hieda N."/>
            <person name="Akita K."/>
            <person name="Komori H."/>
            <person name="Shomura Y."/>
            <person name="Terawaki S."/>
            <person name="Mori K."/>
            <person name="Yasuoka N."/>
            <person name="Higuchi Y."/>
            <person name="Toraya T."/>
        </authorList>
    </citation>
    <scope>X-RAY CRYSTALLOGRAPHY (2.05 ANGSTROMS) IN COMPLEX WITH COFACTORS AND ETHANOLAMINE</scope>
    <scope>COFACTOR</scope>
    <scope>SUBUNIT</scope>
</reference>
<reference evidence="20 21" key="8">
    <citation type="journal article" date="2011" name="Biochemistry">
        <title>How coenzyme B12-dependent ethanolamine ammonia-lyase deals with both enantiomers of 2-amino-1-propanol as substrates: structure-based rationalization.</title>
        <authorList>
            <person name="Shibata N."/>
            <person name="Higuchi Y."/>
            <person name="Toraya T."/>
        </authorList>
    </citation>
    <scope>X-RAY CRYSTALLOGRAPHY (2.10 ANGSTROMS) IN COMPLEX WITH COFACTOR AND ETHANOLAMINE</scope>
    <scope>COFACTOR</scope>
    <scope>SUBUNIT</scope>
</reference>
<reference evidence="22 23" key="9">
    <citation type="journal article" date="2018" name="Angew. Chem. Int. Ed. Engl.">
        <title>Direct Participation of a Peripheral Side Chain of a Corrin Ring in CoenzymeB12 Catalysis.</title>
        <authorList>
            <person name="Shibata N."/>
            <person name="Sueyoshi Y."/>
            <person name="Higuchi Y."/>
            <person name="Toraya T."/>
        </authorList>
    </citation>
    <scope>X-RAY CRYSTALLOGRAPHY (2.00 ANGSTROMS) IN COMPLEX WITH ADENOSYLCOBALAMIN</scope>
    <scope>REACTION MECHANISM</scope>
    <scope>COFACTOR</scope>
    <scope>SUBUNIT</scope>
</reference>
<evidence type="ECO:0000255" key="1">
    <source>
        <dbReference type="HAMAP-Rule" id="MF_00861"/>
    </source>
</evidence>
<evidence type="ECO:0000269" key="2">
    <source>
    </source>
</evidence>
<evidence type="ECO:0000269" key="3">
    <source>
    </source>
</evidence>
<evidence type="ECO:0000269" key="4">
    <source>
    </source>
</evidence>
<evidence type="ECO:0000269" key="5">
    <source>
    </source>
</evidence>
<evidence type="ECO:0000269" key="6">
    <source>
    </source>
</evidence>
<evidence type="ECO:0000303" key="7">
    <source>
    </source>
</evidence>
<evidence type="ECO:0000303" key="8">
    <source>
    </source>
</evidence>
<evidence type="ECO:0000303" key="9">
    <source>
    </source>
</evidence>
<evidence type="ECO:0000305" key="10"/>
<evidence type="ECO:0000305" key="11">
    <source>
    </source>
</evidence>
<evidence type="ECO:0000305" key="12">
    <source>
    </source>
</evidence>
<evidence type="ECO:0000305" key="13">
    <source>
    </source>
</evidence>
<evidence type="ECO:0000305" key="14">
    <source>
    </source>
</evidence>
<evidence type="ECO:0000305" key="15">
    <source>
    </source>
</evidence>
<evidence type="ECO:0007744" key="16">
    <source>
        <dbReference type="PDB" id="3ABO"/>
    </source>
</evidence>
<evidence type="ECO:0007744" key="17">
    <source>
        <dbReference type="PDB" id="3ABQ"/>
    </source>
</evidence>
<evidence type="ECO:0007744" key="18">
    <source>
        <dbReference type="PDB" id="3ABR"/>
    </source>
</evidence>
<evidence type="ECO:0007744" key="19">
    <source>
        <dbReference type="PDB" id="3ABS"/>
    </source>
</evidence>
<evidence type="ECO:0007744" key="20">
    <source>
        <dbReference type="PDB" id="3ANY"/>
    </source>
</evidence>
<evidence type="ECO:0007744" key="21">
    <source>
        <dbReference type="PDB" id="3AO0"/>
    </source>
</evidence>
<evidence type="ECO:0007744" key="22">
    <source>
        <dbReference type="PDB" id="5YSN"/>
    </source>
</evidence>
<evidence type="ECO:0007744" key="23">
    <source>
        <dbReference type="PDB" id="5YSR"/>
    </source>
</evidence>
<evidence type="ECO:0007829" key="24">
    <source>
        <dbReference type="PDB" id="5YSN"/>
    </source>
</evidence>
<evidence type="ECO:0007829" key="25">
    <source>
        <dbReference type="PDB" id="7XRN"/>
    </source>
</evidence>
<organism>
    <name type="scientific">Escherichia coli (strain K12)</name>
    <dbReference type="NCBI Taxonomy" id="83333"/>
    <lineage>
        <taxon>Bacteria</taxon>
        <taxon>Pseudomonadati</taxon>
        <taxon>Pseudomonadota</taxon>
        <taxon>Gammaproteobacteria</taxon>
        <taxon>Enterobacterales</taxon>
        <taxon>Enterobacteriaceae</taxon>
        <taxon>Escherichia</taxon>
    </lineage>
</organism>
<sequence>MKLKTTLFGNVYQFKDVKEVLAKANELRSGDVLAGVAAASSQERVAAKQVLSEMTVADIRNNPVIAYEDDCVTRLIQDDVNETAYNQIKNWSISELREYVLSDETSVDDIAFTRKGLTSEVVAAVAKICSNADLIYGAKKMPVIKKANTTIGIPGTFSARLQPNDTRDDVQSIAAQIYEGLSFGVGDAVIGVNPVTDDVENLSRVLDTIYGVIDKFNIPTQGCVLAHVTTQIEAIRRGAPGGLIFQSICGSEKGLKEFGVELAMLDEARAVGAEFNRIAGENCLYFETGQGSALSAGANFGADQVTMEARNYGLARHYDPFIVNTVVGFIGPEYLYNDRQIIRAGLEDHFMGKLSGISMGCDCCYTNHADADQNLNENLMILLATAGCNYIMGMPLGDDIMLNYQTTAFHDTATVRQLLNLRPSPEFERWLESMGIMANGRLTKRAGDPSLFF</sequence>
<feature type="chain" id="PRO_0000087081" description="Ethanolamine ammonia-lyase large subunit">
    <location>
        <begin position="1"/>
        <end position="453"/>
    </location>
</feature>
<feature type="binding site" evidence="1 4 5 16 19 20 21">
    <location>
        <begin position="160"/>
        <end position="162"/>
    </location>
    <ligand>
        <name>substrate</name>
    </ligand>
</feature>
<feature type="binding site" evidence="1 4 5 16 19 21">
    <location>
        <position position="193"/>
    </location>
    <ligand>
        <name>substrate</name>
    </ligand>
</feature>
<feature type="binding site" evidence="1 6 18 22 23">
    <location>
        <position position="194"/>
    </location>
    <ligand>
        <name>adenosylcob(III)alamin</name>
        <dbReference type="ChEBI" id="CHEBI:18408"/>
    </ligand>
</feature>
<feature type="binding site" evidence="1 4 5 16 17 20 21 22">
    <location>
        <position position="246"/>
    </location>
    <ligand>
        <name>adenosylcob(III)alamin</name>
        <dbReference type="ChEBI" id="CHEBI:18408"/>
    </ligand>
</feature>
<feature type="binding site" evidence="1 4 5 16 19 20 21">
    <location>
        <position position="287"/>
    </location>
    <ligand>
        <name>substrate</name>
    </ligand>
</feature>
<feature type="binding site" evidence="1 10 18 20 21">
    <location>
        <position position="295"/>
    </location>
    <ligand>
        <name>adenosylcob(III)alamin</name>
        <dbReference type="ChEBI" id="CHEBI:18408"/>
    </ligand>
</feature>
<feature type="binding site" evidence="1 4 5 16 19 20 21">
    <location>
        <position position="362"/>
    </location>
    <ligand>
        <name>substrate</name>
    </ligand>
</feature>
<feature type="binding site" evidence="1 4 5 16 17 20 21 22 23">
    <location>
        <position position="401"/>
    </location>
    <ligand>
        <name>adenosylcob(III)alamin</name>
        <dbReference type="ChEBI" id="CHEBI:18408"/>
    </ligand>
</feature>
<feature type="strand" evidence="24">
    <location>
        <begin position="4"/>
        <end position="7"/>
    </location>
</feature>
<feature type="strand" evidence="24">
    <location>
        <begin position="10"/>
        <end position="13"/>
    </location>
</feature>
<feature type="helix" evidence="24">
    <location>
        <begin position="17"/>
        <end position="23"/>
    </location>
</feature>
<feature type="helix" evidence="24">
    <location>
        <begin position="29"/>
        <end position="33"/>
    </location>
</feature>
<feature type="helix" evidence="24">
    <location>
        <begin position="41"/>
        <end position="53"/>
    </location>
</feature>
<feature type="helix" evidence="24">
    <location>
        <begin position="56"/>
        <end position="60"/>
    </location>
</feature>
<feature type="helix" evidence="24">
    <location>
        <begin position="67"/>
        <end position="69"/>
    </location>
</feature>
<feature type="helix" evidence="24">
    <location>
        <begin position="71"/>
        <end position="78"/>
    </location>
</feature>
<feature type="helix" evidence="24">
    <location>
        <begin position="82"/>
        <end position="88"/>
    </location>
</feature>
<feature type="helix" evidence="24">
    <location>
        <begin position="93"/>
        <end position="101"/>
    </location>
</feature>
<feature type="helix" evidence="24">
    <location>
        <begin position="107"/>
        <end position="113"/>
    </location>
</feature>
<feature type="helix" evidence="24">
    <location>
        <begin position="114"/>
        <end position="116"/>
    </location>
</feature>
<feature type="helix" evidence="24">
    <location>
        <begin position="119"/>
        <end position="127"/>
    </location>
</feature>
<feature type="helix" evidence="24">
    <location>
        <begin position="131"/>
        <end position="139"/>
    </location>
</feature>
<feature type="strand" evidence="24">
    <location>
        <begin position="145"/>
        <end position="151"/>
    </location>
</feature>
<feature type="strand" evidence="24">
    <location>
        <begin position="158"/>
        <end position="161"/>
    </location>
</feature>
<feature type="helix" evidence="24">
    <location>
        <begin position="170"/>
        <end position="182"/>
    </location>
</feature>
<feature type="strand" evidence="24">
    <location>
        <begin position="190"/>
        <end position="192"/>
    </location>
</feature>
<feature type="helix" evidence="24">
    <location>
        <begin position="199"/>
        <end position="215"/>
    </location>
</feature>
<feature type="strand" evidence="24">
    <location>
        <begin position="222"/>
        <end position="224"/>
    </location>
</feature>
<feature type="helix" evidence="24">
    <location>
        <begin position="228"/>
        <end position="236"/>
    </location>
</feature>
<feature type="strand" evidence="24">
    <location>
        <begin position="244"/>
        <end position="247"/>
    </location>
</feature>
<feature type="helix" evidence="24">
    <location>
        <begin position="252"/>
        <end position="257"/>
    </location>
</feature>
<feature type="helix" evidence="24">
    <location>
        <begin position="262"/>
        <end position="275"/>
    </location>
</feature>
<feature type="strand" evidence="24">
    <location>
        <begin position="279"/>
        <end position="281"/>
    </location>
</feature>
<feature type="strand" evidence="24">
    <location>
        <begin position="284"/>
        <end position="288"/>
    </location>
</feature>
<feature type="helix" evidence="24">
    <location>
        <begin position="292"/>
        <end position="295"/>
    </location>
</feature>
<feature type="helix" evidence="24">
    <location>
        <begin position="304"/>
        <end position="316"/>
    </location>
</feature>
<feature type="strand" evidence="24">
    <location>
        <begin position="321"/>
        <end position="326"/>
    </location>
</feature>
<feature type="turn" evidence="24">
    <location>
        <begin position="332"/>
        <end position="334"/>
    </location>
</feature>
<feature type="helix" evidence="24">
    <location>
        <begin position="338"/>
        <end position="354"/>
    </location>
</feature>
<feature type="strand" evidence="24">
    <location>
        <begin position="359"/>
        <end position="362"/>
    </location>
</feature>
<feature type="helix" evidence="24">
    <location>
        <begin position="373"/>
        <end position="385"/>
    </location>
</feature>
<feature type="strand" evidence="24">
    <location>
        <begin position="390"/>
        <end position="394"/>
    </location>
</feature>
<feature type="helix" evidence="24">
    <location>
        <begin position="395"/>
        <end position="397"/>
    </location>
</feature>
<feature type="turn" evidence="24">
    <location>
        <begin position="400"/>
        <end position="403"/>
    </location>
</feature>
<feature type="helix" evidence="24">
    <location>
        <begin position="409"/>
        <end position="419"/>
    </location>
</feature>
<feature type="helix" evidence="24">
    <location>
        <begin position="425"/>
        <end position="433"/>
    </location>
</feature>
<feature type="strand" evidence="24">
    <location>
        <begin position="436"/>
        <end position="438"/>
    </location>
</feature>
<feature type="turn" evidence="25">
    <location>
        <begin position="444"/>
        <end position="447"/>
    </location>
</feature>
<feature type="helix" evidence="24">
    <location>
        <begin position="449"/>
        <end position="452"/>
    </location>
</feature>
<keyword id="KW-0002">3D-structure</keyword>
<keyword id="KW-1283">Bacterial microcompartment</keyword>
<keyword id="KW-0846">Cobalamin</keyword>
<keyword id="KW-0170">Cobalt</keyword>
<keyword id="KW-0903">Direct protein sequencing</keyword>
<keyword id="KW-0456">Lyase</keyword>
<keyword id="KW-1185">Reference proteome</keyword>
<name>EUTB_ECOLI</name>